<gene>
    <name evidence="1" type="primary">efp</name>
    <name type="ordered locus">ERGA_CDS_03190</name>
</gene>
<keyword id="KW-0963">Cytoplasm</keyword>
<keyword id="KW-0251">Elongation factor</keyword>
<keyword id="KW-0648">Protein biosynthesis</keyword>
<comment type="function">
    <text evidence="1">Involved in peptide bond synthesis. Stimulates efficient translation and peptide-bond synthesis on native or reconstituted 70S ribosomes in vitro. Probably functions indirectly by altering the affinity of the ribosome for aminoacyl-tRNA, thus increasing their reactivity as acceptors for peptidyl transferase.</text>
</comment>
<comment type="pathway">
    <text evidence="1">Protein biosynthesis; polypeptide chain elongation.</text>
</comment>
<comment type="subcellular location">
    <subcellularLocation>
        <location evidence="1">Cytoplasm</location>
    </subcellularLocation>
</comment>
<comment type="similarity">
    <text evidence="1">Belongs to the elongation factor P family.</text>
</comment>
<dbReference type="EMBL" id="CR925677">
    <property type="protein sequence ID" value="CAI27771.1"/>
    <property type="molecule type" value="Genomic_DNA"/>
</dbReference>
<dbReference type="RefSeq" id="WP_011154999.1">
    <property type="nucleotide sequence ID" value="NC_006831.1"/>
</dbReference>
<dbReference type="SMR" id="Q5FHJ7"/>
<dbReference type="GeneID" id="33057848"/>
<dbReference type="KEGG" id="erg:ERGA_CDS_03190"/>
<dbReference type="HOGENOM" id="CLU_074944_1_1_5"/>
<dbReference type="OrthoDB" id="9801844at2"/>
<dbReference type="UniPathway" id="UPA00345"/>
<dbReference type="Proteomes" id="UP000000533">
    <property type="component" value="Chromosome"/>
</dbReference>
<dbReference type="GO" id="GO:0005737">
    <property type="term" value="C:cytoplasm"/>
    <property type="evidence" value="ECO:0007669"/>
    <property type="project" value="UniProtKB-SubCell"/>
</dbReference>
<dbReference type="GO" id="GO:0003746">
    <property type="term" value="F:translation elongation factor activity"/>
    <property type="evidence" value="ECO:0007669"/>
    <property type="project" value="UniProtKB-UniRule"/>
</dbReference>
<dbReference type="GO" id="GO:0043043">
    <property type="term" value="P:peptide biosynthetic process"/>
    <property type="evidence" value="ECO:0007669"/>
    <property type="project" value="InterPro"/>
</dbReference>
<dbReference type="FunFam" id="2.40.50.140:FF:000004">
    <property type="entry name" value="Elongation factor P"/>
    <property type="match status" value="1"/>
</dbReference>
<dbReference type="FunFam" id="2.40.50.140:FF:000009">
    <property type="entry name" value="Elongation factor P"/>
    <property type="match status" value="1"/>
</dbReference>
<dbReference type="Gene3D" id="2.30.30.30">
    <property type="match status" value="1"/>
</dbReference>
<dbReference type="Gene3D" id="2.40.50.140">
    <property type="entry name" value="Nucleic acid-binding proteins"/>
    <property type="match status" value="2"/>
</dbReference>
<dbReference type="HAMAP" id="MF_00141">
    <property type="entry name" value="EF_P"/>
    <property type="match status" value="1"/>
</dbReference>
<dbReference type="InterPro" id="IPR015365">
    <property type="entry name" value="Elong-fact-P_C"/>
</dbReference>
<dbReference type="InterPro" id="IPR012340">
    <property type="entry name" value="NA-bd_OB-fold"/>
</dbReference>
<dbReference type="InterPro" id="IPR014722">
    <property type="entry name" value="Rib_uL2_dom2"/>
</dbReference>
<dbReference type="InterPro" id="IPR020599">
    <property type="entry name" value="Transl_elong_fac_P/YeiP"/>
</dbReference>
<dbReference type="InterPro" id="IPR013185">
    <property type="entry name" value="Transl_elong_KOW-like"/>
</dbReference>
<dbReference type="InterPro" id="IPR001059">
    <property type="entry name" value="Transl_elong_P/YeiP_cen"/>
</dbReference>
<dbReference type="InterPro" id="IPR011768">
    <property type="entry name" value="Transl_elongation_fac_P"/>
</dbReference>
<dbReference type="InterPro" id="IPR008991">
    <property type="entry name" value="Translation_prot_SH3-like_sf"/>
</dbReference>
<dbReference type="NCBIfam" id="TIGR00038">
    <property type="entry name" value="efp"/>
    <property type="match status" value="1"/>
</dbReference>
<dbReference type="NCBIfam" id="NF001810">
    <property type="entry name" value="PRK00529.1"/>
    <property type="match status" value="1"/>
</dbReference>
<dbReference type="PANTHER" id="PTHR30053">
    <property type="entry name" value="ELONGATION FACTOR P"/>
    <property type="match status" value="1"/>
</dbReference>
<dbReference type="PANTHER" id="PTHR30053:SF14">
    <property type="entry name" value="TRANSLATION ELONGATION FACTOR KOW-LIKE DOMAIN-CONTAINING PROTEIN"/>
    <property type="match status" value="1"/>
</dbReference>
<dbReference type="Pfam" id="PF01132">
    <property type="entry name" value="EFP"/>
    <property type="match status" value="1"/>
</dbReference>
<dbReference type="Pfam" id="PF08207">
    <property type="entry name" value="EFP_N"/>
    <property type="match status" value="1"/>
</dbReference>
<dbReference type="Pfam" id="PF09285">
    <property type="entry name" value="Elong-fact-P_C"/>
    <property type="match status" value="1"/>
</dbReference>
<dbReference type="PIRSF" id="PIRSF005901">
    <property type="entry name" value="EF-P"/>
    <property type="match status" value="1"/>
</dbReference>
<dbReference type="SMART" id="SM01185">
    <property type="entry name" value="EFP"/>
    <property type="match status" value="1"/>
</dbReference>
<dbReference type="SMART" id="SM00841">
    <property type="entry name" value="Elong-fact-P_C"/>
    <property type="match status" value="1"/>
</dbReference>
<dbReference type="SUPFAM" id="SSF50249">
    <property type="entry name" value="Nucleic acid-binding proteins"/>
    <property type="match status" value="2"/>
</dbReference>
<dbReference type="SUPFAM" id="SSF50104">
    <property type="entry name" value="Translation proteins SH3-like domain"/>
    <property type="match status" value="1"/>
</dbReference>
<sequence>MAERGSDIRPGYVLEHNNALYLVVKIMHTQPGKGGAYIQAEMKNLKTGAKQYERFRADGDIKRAILDEADYQYIYGDDSMLTVMHLGNYEQITIKKDILGDKSIYLKDNMVITLLSYNGEIISAKVPDYVTLQVIETEAVIKGQTVSSSSYKVAMLENNQRINVPTFIKSGDKIVVYTPDDSYYERAKE</sequence>
<evidence type="ECO:0000255" key="1">
    <source>
        <dbReference type="HAMAP-Rule" id="MF_00141"/>
    </source>
</evidence>
<proteinExistence type="inferred from homology"/>
<name>EFP_EHRRG</name>
<reference key="1">
    <citation type="journal article" date="2006" name="J. Bacteriol.">
        <title>Comparative genomic analysis of three strains of Ehrlichia ruminantium reveals an active process of genome size plasticity.</title>
        <authorList>
            <person name="Frutos R."/>
            <person name="Viari A."/>
            <person name="Ferraz C."/>
            <person name="Morgat A."/>
            <person name="Eychenie S."/>
            <person name="Kandassamy Y."/>
            <person name="Chantal I."/>
            <person name="Bensaid A."/>
            <person name="Coissac E."/>
            <person name="Vachiery N."/>
            <person name="Demaille J."/>
            <person name="Martinez D."/>
        </authorList>
    </citation>
    <scope>NUCLEOTIDE SEQUENCE [LARGE SCALE GENOMIC DNA]</scope>
    <source>
        <strain>Gardel</strain>
    </source>
</reference>
<accession>Q5FHJ7</accession>
<organism>
    <name type="scientific">Ehrlichia ruminantium (strain Gardel)</name>
    <dbReference type="NCBI Taxonomy" id="302409"/>
    <lineage>
        <taxon>Bacteria</taxon>
        <taxon>Pseudomonadati</taxon>
        <taxon>Pseudomonadota</taxon>
        <taxon>Alphaproteobacteria</taxon>
        <taxon>Rickettsiales</taxon>
        <taxon>Anaplasmataceae</taxon>
        <taxon>Ehrlichia</taxon>
    </lineage>
</organism>
<feature type="chain" id="PRO_1000010739" description="Elongation factor P">
    <location>
        <begin position="1"/>
        <end position="189"/>
    </location>
</feature>
<protein>
    <recommendedName>
        <fullName evidence="1">Elongation factor P</fullName>
        <shortName evidence="1">EF-P</shortName>
    </recommendedName>
</protein>